<gene>
    <name type="primary">Rgn</name>
    <name type="synonym">Smp30</name>
</gene>
<evidence type="ECO:0000250" key="1"/>
<evidence type="ECO:0000269" key="2">
    <source>
    </source>
</evidence>
<evidence type="ECO:0000269" key="3">
    <source>
    </source>
</evidence>
<evidence type="ECO:0000269" key="4">
    <source>
    </source>
</evidence>
<evidence type="ECO:0000269" key="5">
    <source>
    </source>
</evidence>
<evidence type="ECO:0000269" key="6">
    <source>
    </source>
</evidence>
<evidence type="ECO:0000305" key="7"/>
<evidence type="ECO:0000305" key="8">
    <source>
    </source>
</evidence>
<evidence type="ECO:0007744" key="9">
    <source>
    </source>
</evidence>
<evidence type="ECO:0007829" key="10">
    <source>
        <dbReference type="PDB" id="4GN8"/>
    </source>
</evidence>
<feature type="chain" id="PRO_0000173047" description="Regucalcin">
    <location>
        <begin position="1"/>
        <end position="299"/>
    </location>
</feature>
<feature type="active site" description="Proton donor/acceptor" evidence="8">
    <location>
        <position position="204"/>
    </location>
</feature>
<feature type="binding site">
    <location>
        <position position="18"/>
    </location>
    <ligand>
        <name>a divalent metal cation</name>
        <dbReference type="ChEBI" id="CHEBI:60240"/>
    </ligand>
</feature>
<feature type="binding site">
    <location>
        <position position="101"/>
    </location>
    <ligand>
        <name>substrate</name>
    </ligand>
</feature>
<feature type="binding site">
    <location>
        <position position="103"/>
    </location>
    <ligand>
        <name>substrate</name>
    </ligand>
</feature>
<feature type="binding site">
    <location>
        <position position="121"/>
    </location>
    <ligand>
        <name>substrate</name>
    </ligand>
</feature>
<feature type="binding site">
    <location>
        <position position="154"/>
    </location>
    <ligand>
        <name>a divalent metal cation</name>
        <dbReference type="ChEBI" id="CHEBI:60240"/>
    </ligand>
</feature>
<feature type="binding site">
    <location>
        <position position="204"/>
    </location>
    <ligand>
        <name>a divalent metal cation</name>
        <dbReference type="ChEBI" id="CHEBI:60240"/>
    </ligand>
</feature>
<feature type="modified residue" description="N6-succinyllysine" evidence="9">
    <location>
        <position position="144"/>
    </location>
</feature>
<feature type="modified residue" description="N6-succinyllysine" evidence="9">
    <location>
        <position position="244"/>
    </location>
</feature>
<feature type="modified residue" description="N6-succinyllysine" evidence="9">
    <location>
        <position position="253"/>
    </location>
</feature>
<feature type="sequence conflict" description="In Ref. 3; BAE27192." evidence="7" ref="3">
    <original>Q</original>
    <variation>R</variation>
    <location>
        <position position="201"/>
    </location>
</feature>
<feature type="sequence conflict" description="In Ref. 3; BAE27192." evidence="7" ref="3">
    <original>Q</original>
    <variation>P</variation>
    <location>
        <position position="236"/>
    </location>
</feature>
<feature type="strand" evidence="10">
    <location>
        <begin position="5"/>
        <end position="10"/>
    </location>
</feature>
<feature type="strand" evidence="10">
    <location>
        <begin position="15"/>
        <end position="23"/>
    </location>
</feature>
<feature type="turn" evidence="10">
    <location>
        <begin position="24"/>
        <end position="27"/>
    </location>
</feature>
<feature type="strand" evidence="10">
    <location>
        <begin position="28"/>
        <end position="33"/>
    </location>
</feature>
<feature type="turn" evidence="10">
    <location>
        <begin position="34"/>
        <end position="37"/>
    </location>
</feature>
<feature type="strand" evidence="10">
    <location>
        <begin position="38"/>
        <end position="43"/>
    </location>
</feature>
<feature type="turn" evidence="10">
    <location>
        <begin position="44"/>
        <end position="47"/>
    </location>
</feature>
<feature type="strand" evidence="10">
    <location>
        <begin position="48"/>
        <end position="53"/>
    </location>
</feature>
<feature type="strand" evidence="10">
    <location>
        <begin position="58"/>
        <end position="64"/>
    </location>
</feature>
<feature type="strand" evidence="10">
    <location>
        <begin position="67"/>
        <end position="73"/>
    </location>
</feature>
<feature type="strand" evidence="10">
    <location>
        <begin position="76"/>
        <end position="81"/>
    </location>
</feature>
<feature type="turn" evidence="10">
    <location>
        <begin position="82"/>
        <end position="85"/>
    </location>
</feature>
<feature type="strand" evidence="10">
    <location>
        <begin position="86"/>
        <end position="92"/>
    </location>
</feature>
<feature type="strand" evidence="10">
    <location>
        <begin position="98"/>
        <end position="107"/>
    </location>
</feature>
<feature type="strand" evidence="10">
    <location>
        <begin position="113"/>
        <end position="119"/>
    </location>
</feature>
<feature type="strand" evidence="10">
    <location>
        <begin position="132"/>
        <end position="137"/>
    </location>
</feature>
<feature type="strand" evidence="10">
    <location>
        <begin position="143"/>
        <end position="158"/>
    </location>
</feature>
<feature type="strand" evidence="10">
    <location>
        <begin position="164"/>
        <end position="169"/>
    </location>
</feature>
<feature type="helix" evidence="10">
    <location>
        <begin position="170"/>
        <end position="172"/>
    </location>
</feature>
<feature type="strand" evidence="10">
    <location>
        <begin position="174"/>
        <end position="181"/>
    </location>
</feature>
<feature type="turn" evidence="10">
    <location>
        <begin position="182"/>
        <end position="185"/>
    </location>
</feature>
<feature type="strand" evidence="10">
    <location>
        <begin position="186"/>
        <end position="195"/>
    </location>
</feature>
<feature type="helix" evidence="10">
    <location>
        <begin position="198"/>
        <end position="200"/>
    </location>
</feature>
<feature type="strand" evidence="10">
    <location>
        <begin position="202"/>
        <end position="209"/>
    </location>
</feature>
<feature type="strand" evidence="10">
    <location>
        <begin position="214"/>
        <end position="219"/>
    </location>
</feature>
<feature type="turn" evidence="10">
    <location>
        <begin position="220"/>
        <end position="222"/>
    </location>
</feature>
<feature type="strand" evidence="10">
    <location>
        <begin position="223"/>
        <end position="227"/>
    </location>
</feature>
<feature type="turn" evidence="10">
    <location>
        <begin position="229"/>
        <end position="231"/>
    </location>
</feature>
<feature type="strand" evidence="10">
    <location>
        <begin position="234"/>
        <end position="239"/>
    </location>
</feature>
<feature type="strand" evidence="10">
    <location>
        <begin position="245"/>
        <end position="252"/>
    </location>
</feature>
<feature type="helix" evidence="10">
    <location>
        <begin position="253"/>
        <end position="255"/>
    </location>
</feature>
<feature type="strand" evidence="10">
    <location>
        <begin position="257"/>
        <end position="263"/>
    </location>
</feature>
<feature type="helix" evidence="10">
    <location>
        <begin position="269"/>
        <end position="274"/>
    </location>
</feature>
<feature type="turn" evidence="10">
    <location>
        <begin position="276"/>
        <end position="279"/>
    </location>
</feature>
<feature type="strand" evidence="10">
    <location>
        <begin position="281"/>
        <end position="285"/>
    </location>
</feature>
<protein>
    <recommendedName>
        <fullName>Regucalcin</fullName>
        <shortName>RC</shortName>
    </recommendedName>
    <alternativeName>
        <fullName>Gluconolactonase</fullName>
        <shortName>GNL</shortName>
        <ecNumber>3.1.1.17</ecNumber>
    </alternativeName>
    <alternativeName>
        <fullName>Senescence marker protein 30</fullName>
        <shortName>SMP-30</shortName>
    </alternativeName>
</protein>
<organism>
    <name type="scientific">Mus musculus</name>
    <name type="common">Mouse</name>
    <dbReference type="NCBI Taxonomy" id="10090"/>
    <lineage>
        <taxon>Eukaryota</taxon>
        <taxon>Metazoa</taxon>
        <taxon>Chordata</taxon>
        <taxon>Craniata</taxon>
        <taxon>Vertebrata</taxon>
        <taxon>Euteleostomi</taxon>
        <taxon>Mammalia</taxon>
        <taxon>Eutheria</taxon>
        <taxon>Euarchontoglires</taxon>
        <taxon>Glires</taxon>
        <taxon>Rodentia</taxon>
        <taxon>Myomorpha</taxon>
        <taxon>Muroidea</taxon>
        <taxon>Muridae</taxon>
        <taxon>Murinae</taxon>
        <taxon>Mus</taxon>
        <taxon>Mus</taxon>
    </lineage>
</organism>
<dbReference type="EC" id="3.1.1.17"/>
<dbReference type="EMBL" id="U28937">
    <property type="protein sequence ID" value="AAC52721.1"/>
    <property type="molecule type" value="mRNA"/>
</dbReference>
<dbReference type="EMBL" id="U32170">
    <property type="protein sequence ID" value="AAD03478.1"/>
    <property type="molecule type" value="Genomic_DNA"/>
</dbReference>
<dbReference type="EMBL" id="D86217">
    <property type="protein sequence ID" value="BAA13046.1"/>
    <property type="molecule type" value="mRNA"/>
</dbReference>
<dbReference type="EMBL" id="AK146465">
    <property type="protein sequence ID" value="BAE27192.1"/>
    <property type="molecule type" value="mRNA"/>
</dbReference>
<dbReference type="EMBL" id="AL672073">
    <property type="status" value="NOT_ANNOTATED_CDS"/>
    <property type="molecule type" value="Genomic_DNA"/>
</dbReference>
<dbReference type="EMBL" id="BC012710">
    <property type="protein sequence ID" value="AAH12710.1"/>
    <property type="molecule type" value="mRNA"/>
</dbReference>
<dbReference type="CCDS" id="CCDS30043.1"/>
<dbReference type="PIR" id="S72173">
    <property type="entry name" value="S72173"/>
</dbReference>
<dbReference type="RefSeq" id="NP_001404943.1">
    <property type="nucleotide sequence ID" value="NM_001418014.1"/>
</dbReference>
<dbReference type="RefSeq" id="NP_001404944.1">
    <property type="nucleotide sequence ID" value="NM_001418015.1"/>
</dbReference>
<dbReference type="RefSeq" id="NP_001404945.1">
    <property type="nucleotide sequence ID" value="NM_001418016.1"/>
</dbReference>
<dbReference type="RefSeq" id="NP_001404946.1">
    <property type="nucleotide sequence ID" value="NM_001418017.1"/>
</dbReference>
<dbReference type="RefSeq" id="NP_033086.1">
    <property type="nucleotide sequence ID" value="NM_009060.3"/>
</dbReference>
<dbReference type="RefSeq" id="XP_006527635.1">
    <property type="nucleotide sequence ID" value="XM_006527572.3"/>
</dbReference>
<dbReference type="PDB" id="4GN7">
    <property type="method" value="X-ray"/>
    <property type="resolution" value="1.95 A"/>
    <property type="chains" value="A/B=1-299"/>
</dbReference>
<dbReference type="PDB" id="4GN8">
    <property type="method" value="X-ray"/>
    <property type="resolution" value="1.70 A"/>
    <property type="chains" value="A/B=1-299"/>
</dbReference>
<dbReference type="PDB" id="4GN9">
    <property type="method" value="X-ray"/>
    <property type="resolution" value="2.00 A"/>
    <property type="chains" value="A/B=1-299"/>
</dbReference>
<dbReference type="PDB" id="4GNA">
    <property type="method" value="X-ray"/>
    <property type="resolution" value="1.85 A"/>
    <property type="chains" value="A/B=1-299"/>
</dbReference>
<dbReference type="PDBsum" id="4GN7"/>
<dbReference type="PDBsum" id="4GN8"/>
<dbReference type="PDBsum" id="4GN9"/>
<dbReference type="PDBsum" id="4GNA"/>
<dbReference type="SMR" id="Q64374"/>
<dbReference type="FunCoup" id="Q64374">
    <property type="interactions" value="965"/>
</dbReference>
<dbReference type="STRING" id="10090.ENSMUSP00000023832"/>
<dbReference type="GlyGen" id="Q64374">
    <property type="glycosylation" value="1 site, 1 O-linked glycan (1 site)"/>
</dbReference>
<dbReference type="iPTMnet" id="Q64374"/>
<dbReference type="PhosphoSitePlus" id="Q64374"/>
<dbReference type="SwissPalm" id="Q64374"/>
<dbReference type="REPRODUCTION-2DPAGE" id="Q64374"/>
<dbReference type="CPTAC" id="non-CPTAC-3998"/>
<dbReference type="jPOST" id="Q64374"/>
<dbReference type="PaxDb" id="10090-ENSMUSP00000023832"/>
<dbReference type="PeptideAtlas" id="Q64374"/>
<dbReference type="ProteomicsDB" id="254932"/>
<dbReference type="Antibodypedia" id="25260">
    <property type="antibodies" value="181 antibodies from 27 providers"/>
</dbReference>
<dbReference type="DNASU" id="19733"/>
<dbReference type="Ensembl" id="ENSMUST00000023832.7">
    <property type="protein sequence ID" value="ENSMUSP00000023832.7"/>
    <property type="gene ID" value="ENSMUSG00000023070.7"/>
</dbReference>
<dbReference type="GeneID" id="19733"/>
<dbReference type="KEGG" id="mmu:19733"/>
<dbReference type="UCSC" id="uc009std.1">
    <property type="organism name" value="mouse"/>
</dbReference>
<dbReference type="AGR" id="MGI:108024"/>
<dbReference type="CTD" id="9104"/>
<dbReference type="MGI" id="MGI:108024">
    <property type="gene designation" value="Rgn"/>
</dbReference>
<dbReference type="VEuPathDB" id="HostDB:ENSMUSG00000023070"/>
<dbReference type="eggNOG" id="KOG4499">
    <property type="taxonomic scope" value="Eukaryota"/>
</dbReference>
<dbReference type="GeneTree" id="ENSGT00390000014995"/>
<dbReference type="HOGENOM" id="CLU_036110_3_2_1"/>
<dbReference type="InParanoid" id="Q64374"/>
<dbReference type="OMA" id="WAGTMRY"/>
<dbReference type="OrthoDB" id="423498at2759"/>
<dbReference type="PhylomeDB" id="Q64374"/>
<dbReference type="TreeFam" id="TF323663"/>
<dbReference type="BRENDA" id="3.1.1.17">
    <property type="organism ID" value="3474"/>
</dbReference>
<dbReference type="UniPathway" id="UPA00991">
    <property type="reaction ID" value="UER00938"/>
</dbReference>
<dbReference type="BioGRID-ORCS" id="19733">
    <property type="hits" value="1 hit in 79 CRISPR screens"/>
</dbReference>
<dbReference type="ChiTaRS" id="Rgn">
    <property type="organism name" value="mouse"/>
</dbReference>
<dbReference type="EvolutionaryTrace" id="Q64374"/>
<dbReference type="PRO" id="PR:Q64374"/>
<dbReference type="Proteomes" id="UP000000589">
    <property type="component" value="Chromosome X"/>
</dbReference>
<dbReference type="RNAct" id="Q64374">
    <property type="molecule type" value="protein"/>
</dbReference>
<dbReference type="Bgee" id="ENSMUSG00000023070">
    <property type="expression patterns" value="Expressed in left lobe of liver and 92 other cell types or tissues"/>
</dbReference>
<dbReference type="GO" id="GO:0005737">
    <property type="term" value="C:cytoplasm"/>
    <property type="evidence" value="ECO:0000314"/>
    <property type="project" value="MGI"/>
</dbReference>
<dbReference type="GO" id="GO:0005634">
    <property type="term" value="C:nucleus"/>
    <property type="evidence" value="ECO:0000314"/>
    <property type="project" value="MGI"/>
</dbReference>
<dbReference type="GO" id="GO:0005509">
    <property type="term" value="F:calcium ion binding"/>
    <property type="evidence" value="ECO:0000250"/>
    <property type="project" value="UniProtKB"/>
</dbReference>
<dbReference type="GO" id="GO:0030234">
    <property type="term" value="F:enzyme regulator activity"/>
    <property type="evidence" value="ECO:0007669"/>
    <property type="project" value="InterPro"/>
</dbReference>
<dbReference type="GO" id="GO:0004341">
    <property type="term" value="F:gluconolactonase activity"/>
    <property type="evidence" value="ECO:0000314"/>
    <property type="project" value="UniProtKB"/>
</dbReference>
<dbReference type="GO" id="GO:0008270">
    <property type="term" value="F:zinc ion binding"/>
    <property type="evidence" value="ECO:0000250"/>
    <property type="project" value="UniProtKB"/>
</dbReference>
<dbReference type="GO" id="GO:0006874">
    <property type="term" value="P:intracellular calcium ion homeostasis"/>
    <property type="evidence" value="ECO:0000250"/>
    <property type="project" value="UniProtKB"/>
</dbReference>
<dbReference type="GO" id="GO:0019853">
    <property type="term" value="P:L-ascorbic acid biosynthetic process"/>
    <property type="evidence" value="ECO:0000314"/>
    <property type="project" value="UniProtKB"/>
</dbReference>
<dbReference type="GO" id="GO:0032781">
    <property type="term" value="P:positive regulation of ATP-dependent activity"/>
    <property type="evidence" value="ECO:0000250"/>
    <property type="project" value="UniProtKB"/>
</dbReference>
<dbReference type="GO" id="GO:0050848">
    <property type="term" value="P:regulation of calcium-mediated signaling"/>
    <property type="evidence" value="ECO:0000250"/>
    <property type="project" value="UniProtKB"/>
</dbReference>
<dbReference type="FunFam" id="2.120.10.30:FF:000027">
    <property type="entry name" value="Regucalcin homologue"/>
    <property type="match status" value="1"/>
</dbReference>
<dbReference type="Gene3D" id="2.120.10.30">
    <property type="entry name" value="TolB, C-terminal domain"/>
    <property type="match status" value="1"/>
</dbReference>
<dbReference type="InterPro" id="IPR011042">
    <property type="entry name" value="6-blade_b-propeller_TolB-like"/>
</dbReference>
<dbReference type="InterPro" id="IPR008367">
    <property type="entry name" value="Regucalcin"/>
</dbReference>
<dbReference type="InterPro" id="IPR013658">
    <property type="entry name" value="SGL"/>
</dbReference>
<dbReference type="InterPro" id="IPR005511">
    <property type="entry name" value="SMP-30"/>
</dbReference>
<dbReference type="PANTHER" id="PTHR10907">
    <property type="entry name" value="REGUCALCIN"/>
    <property type="match status" value="1"/>
</dbReference>
<dbReference type="PANTHER" id="PTHR10907:SF54">
    <property type="entry name" value="REGUCALCIN"/>
    <property type="match status" value="1"/>
</dbReference>
<dbReference type="Pfam" id="PF08450">
    <property type="entry name" value="SGL"/>
    <property type="match status" value="1"/>
</dbReference>
<dbReference type="PRINTS" id="PR01791">
    <property type="entry name" value="REGUCALCIN"/>
</dbReference>
<dbReference type="PRINTS" id="PR01790">
    <property type="entry name" value="SMP30FAMILY"/>
</dbReference>
<dbReference type="SUPFAM" id="SSF63829">
    <property type="entry name" value="Calcium-dependent phosphotriesterase"/>
    <property type="match status" value="1"/>
</dbReference>
<reference key="1">
    <citation type="journal article" date="1996" name="Biochim. Biophys. Acta">
        <title>Isolation and characterization of genomic and cDNA clones encoding mouse senescence marker protein-30 (SMP30).</title>
        <authorList>
            <person name="Fujita T."/>
            <person name="Shirasawa T."/>
            <person name="Maruyama N."/>
        </authorList>
    </citation>
    <scope>NUCLEOTIDE SEQUENCE [GENOMIC DNA / MRNA]</scope>
    <scope>TISSUE SPECIFICITY</scope>
    <source>
        <strain>C57BL/6J</strain>
        <tissue>Liver</tissue>
    </source>
</reference>
<reference key="2">
    <citation type="journal article" date="1997" name="Mol. Cell. Biochem.">
        <title>Molecular cloning of the cDNA coding for regucalcin and its mRNA expression in mouse liver: the expression is stimulated by calcium administration.</title>
        <authorList>
            <person name="Murata T."/>
            <person name="Yamaguchi M."/>
        </authorList>
    </citation>
    <scope>NUCLEOTIDE SEQUENCE [MRNA]</scope>
    <scope>TISSUE SPECIFICITY</scope>
    <scope>INDUCTION</scope>
    <source>
        <tissue>Liver</tissue>
    </source>
</reference>
<reference key="3">
    <citation type="journal article" date="2005" name="Science">
        <title>The transcriptional landscape of the mammalian genome.</title>
        <authorList>
            <person name="Carninci P."/>
            <person name="Kasukawa T."/>
            <person name="Katayama S."/>
            <person name="Gough J."/>
            <person name="Frith M.C."/>
            <person name="Maeda N."/>
            <person name="Oyama R."/>
            <person name="Ravasi T."/>
            <person name="Lenhard B."/>
            <person name="Wells C."/>
            <person name="Kodzius R."/>
            <person name="Shimokawa K."/>
            <person name="Bajic V.B."/>
            <person name="Brenner S.E."/>
            <person name="Batalov S."/>
            <person name="Forrest A.R."/>
            <person name="Zavolan M."/>
            <person name="Davis M.J."/>
            <person name="Wilming L.G."/>
            <person name="Aidinis V."/>
            <person name="Allen J.E."/>
            <person name="Ambesi-Impiombato A."/>
            <person name="Apweiler R."/>
            <person name="Aturaliya R.N."/>
            <person name="Bailey T.L."/>
            <person name="Bansal M."/>
            <person name="Baxter L."/>
            <person name="Beisel K.W."/>
            <person name="Bersano T."/>
            <person name="Bono H."/>
            <person name="Chalk A.M."/>
            <person name="Chiu K.P."/>
            <person name="Choudhary V."/>
            <person name="Christoffels A."/>
            <person name="Clutterbuck D.R."/>
            <person name="Crowe M.L."/>
            <person name="Dalla E."/>
            <person name="Dalrymple B.P."/>
            <person name="de Bono B."/>
            <person name="Della Gatta G."/>
            <person name="di Bernardo D."/>
            <person name="Down T."/>
            <person name="Engstrom P."/>
            <person name="Fagiolini M."/>
            <person name="Faulkner G."/>
            <person name="Fletcher C.F."/>
            <person name="Fukushima T."/>
            <person name="Furuno M."/>
            <person name="Futaki S."/>
            <person name="Gariboldi M."/>
            <person name="Georgii-Hemming P."/>
            <person name="Gingeras T.R."/>
            <person name="Gojobori T."/>
            <person name="Green R.E."/>
            <person name="Gustincich S."/>
            <person name="Harbers M."/>
            <person name="Hayashi Y."/>
            <person name="Hensch T.K."/>
            <person name="Hirokawa N."/>
            <person name="Hill D."/>
            <person name="Huminiecki L."/>
            <person name="Iacono M."/>
            <person name="Ikeo K."/>
            <person name="Iwama A."/>
            <person name="Ishikawa T."/>
            <person name="Jakt M."/>
            <person name="Kanapin A."/>
            <person name="Katoh M."/>
            <person name="Kawasawa Y."/>
            <person name="Kelso J."/>
            <person name="Kitamura H."/>
            <person name="Kitano H."/>
            <person name="Kollias G."/>
            <person name="Krishnan S.P."/>
            <person name="Kruger A."/>
            <person name="Kummerfeld S.K."/>
            <person name="Kurochkin I.V."/>
            <person name="Lareau L.F."/>
            <person name="Lazarevic D."/>
            <person name="Lipovich L."/>
            <person name="Liu J."/>
            <person name="Liuni S."/>
            <person name="McWilliam S."/>
            <person name="Madan Babu M."/>
            <person name="Madera M."/>
            <person name="Marchionni L."/>
            <person name="Matsuda H."/>
            <person name="Matsuzawa S."/>
            <person name="Miki H."/>
            <person name="Mignone F."/>
            <person name="Miyake S."/>
            <person name="Morris K."/>
            <person name="Mottagui-Tabar S."/>
            <person name="Mulder N."/>
            <person name="Nakano N."/>
            <person name="Nakauchi H."/>
            <person name="Ng P."/>
            <person name="Nilsson R."/>
            <person name="Nishiguchi S."/>
            <person name="Nishikawa S."/>
            <person name="Nori F."/>
            <person name="Ohara O."/>
            <person name="Okazaki Y."/>
            <person name="Orlando V."/>
            <person name="Pang K.C."/>
            <person name="Pavan W.J."/>
            <person name="Pavesi G."/>
            <person name="Pesole G."/>
            <person name="Petrovsky N."/>
            <person name="Piazza S."/>
            <person name="Reed J."/>
            <person name="Reid J.F."/>
            <person name="Ring B.Z."/>
            <person name="Ringwald M."/>
            <person name="Rost B."/>
            <person name="Ruan Y."/>
            <person name="Salzberg S.L."/>
            <person name="Sandelin A."/>
            <person name="Schneider C."/>
            <person name="Schoenbach C."/>
            <person name="Sekiguchi K."/>
            <person name="Semple C.A."/>
            <person name="Seno S."/>
            <person name="Sessa L."/>
            <person name="Sheng Y."/>
            <person name="Shibata Y."/>
            <person name="Shimada H."/>
            <person name="Shimada K."/>
            <person name="Silva D."/>
            <person name="Sinclair B."/>
            <person name="Sperling S."/>
            <person name="Stupka E."/>
            <person name="Sugiura K."/>
            <person name="Sultana R."/>
            <person name="Takenaka Y."/>
            <person name="Taki K."/>
            <person name="Tammoja K."/>
            <person name="Tan S.L."/>
            <person name="Tang S."/>
            <person name="Taylor M.S."/>
            <person name="Tegner J."/>
            <person name="Teichmann S.A."/>
            <person name="Ueda H.R."/>
            <person name="van Nimwegen E."/>
            <person name="Verardo R."/>
            <person name="Wei C.L."/>
            <person name="Yagi K."/>
            <person name="Yamanishi H."/>
            <person name="Zabarovsky E."/>
            <person name="Zhu S."/>
            <person name="Zimmer A."/>
            <person name="Hide W."/>
            <person name="Bult C."/>
            <person name="Grimmond S.M."/>
            <person name="Teasdale R.D."/>
            <person name="Liu E.T."/>
            <person name="Brusic V."/>
            <person name="Quackenbush J."/>
            <person name="Wahlestedt C."/>
            <person name="Mattick J.S."/>
            <person name="Hume D.A."/>
            <person name="Kai C."/>
            <person name="Sasaki D."/>
            <person name="Tomaru Y."/>
            <person name="Fukuda S."/>
            <person name="Kanamori-Katayama M."/>
            <person name="Suzuki M."/>
            <person name="Aoki J."/>
            <person name="Arakawa T."/>
            <person name="Iida J."/>
            <person name="Imamura K."/>
            <person name="Itoh M."/>
            <person name="Kato T."/>
            <person name="Kawaji H."/>
            <person name="Kawagashira N."/>
            <person name="Kawashima T."/>
            <person name="Kojima M."/>
            <person name="Kondo S."/>
            <person name="Konno H."/>
            <person name="Nakano K."/>
            <person name="Ninomiya N."/>
            <person name="Nishio T."/>
            <person name="Okada M."/>
            <person name="Plessy C."/>
            <person name="Shibata K."/>
            <person name="Shiraki T."/>
            <person name="Suzuki S."/>
            <person name="Tagami M."/>
            <person name="Waki K."/>
            <person name="Watahiki A."/>
            <person name="Okamura-Oho Y."/>
            <person name="Suzuki H."/>
            <person name="Kawai J."/>
            <person name="Hayashizaki Y."/>
        </authorList>
    </citation>
    <scope>NUCLEOTIDE SEQUENCE [LARGE SCALE MRNA]</scope>
    <source>
        <strain>C57BL/6J</strain>
        <tissue>Embryonic liver</tissue>
    </source>
</reference>
<reference key="4">
    <citation type="journal article" date="2009" name="PLoS Biol.">
        <title>Lineage-specific biology revealed by a finished genome assembly of the mouse.</title>
        <authorList>
            <person name="Church D.M."/>
            <person name="Goodstadt L."/>
            <person name="Hillier L.W."/>
            <person name="Zody M.C."/>
            <person name="Goldstein S."/>
            <person name="She X."/>
            <person name="Bult C.J."/>
            <person name="Agarwala R."/>
            <person name="Cherry J.L."/>
            <person name="DiCuccio M."/>
            <person name="Hlavina W."/>
            <person name="Kapustin Y."/>
            <person name="Meric P."/>
            <person name="Maglott D."/>
            <person name="Birtle Z."/>
            <person name="Marques A.C."/>
            <person name="Graves T."/>
            <person name="Zhou S."/>
            <person name="Teague B."/>
            <person name="Potamousis K."/>
            <person name="Churas C."/>
            <person name="Place M."/>
            <person name="Herschleb J."/>
            <person name="Runnheim R."/>
            <person name="Forrest D."/>
            <person name="Amos-Landgraf J."/>
            <person name="Schwartz D.C."/>
            <person name="Cheng Z."/>
            <person name="Lindblad-Toh K."/>
            <person name="Eichler E.E."/>
            <person name="Ponting C.P."/>
        </authorList>
    </citation>
    <scope>NUCLEOTIDE SEQUENCE [LARGE SCALE GENOMIC DNA]</scope>
    <source>
        <strain>C57BL/6J</strain>
    </source>
</reference>
<reference key="5">
    <citation type="journal article" date="2004" name="Genome Res.">
        <title>The status, quality, and expansion of the NIH full-length cDNA project: the Mammalian Gene Collection (MGC).</title>
        <authorList>
            <consortium name="The MGC Project Team"/>
        </authorList>
    </citation>
    <scope>NUCLEOTIDE SEQUENCE [LARGE SCALE MRNA]</scope>
    <source>
        <strain>FVB/N</strain>
        <tissue>Liver</tissue>
    </source>
</reference>
<reference key="6">
    <citation type="journal article" date="2004" name="Biochem. Biophys. Res. Commun.">
        <title>SMP30 deficiency in mice causes an accumulation of neutral lipids and phospholipids in the liver and shortens the life span.</title>
        <authorList>
            <person name="Ishigami A."/>
            <person name="Kondo Y."/>
            <person name="Nanba R."/>
            <person name="Ohsawa T."/>
            <person name="Handa S."/>
            <person name="Kubo S."/>
            <person name="Akita M."/>
            <person name="Maruyama N."/>
        </authorList>
    </citation>
    <scope>DISRUPTION PHENOTYPE</scope>
</reference>
<reference key="7">
    <citation type="journal article" date="2006" name="Proc. Natl. Acad. Sci. U.S.A.">
        <title>Senescence marker protein 30 functions as gluconolactonase in L-ascorbic acid biosynthesis, and its knockout mice are prone to scurvy.</title>
        <authorList>
            <person name="Kondo Y."/>
            <person name="Inai Y."/>
            <person name="Sato Y."/>
            <person name="Handa S."/>
            <person name="Kubo S."/>
            <person name="Shimokado K."/>
            <person name="Goto S."/>
            <person name="Nishikimi M."/>
            <person name="Maruyama N."/>
            <person name="Ishigami A."/>
        </authorList>
    </citation>
    <scope>DISRUPTION PHENOTYPE</scope>
    <scope>FUNCTION</scope>
    <scope>PATHWAY</scope>
</reference>
<reference key="8">
    <citation type="journal article" date="2010" name="Cell">
        <title>A tissue-specific atlas of mouse protein phosphorylation and expression.</title>
        <authorList>
            <person name="Huttlin E.L."/>
            <person name="Jedrychowski M.P."/>
            <person name="Elias J.E."/>
            <person name="Goswami T."/>
            <person name="Rad R."/>
            <person name="Beausoleil S.A."/>
            <person name="Villen J."/>
            <person name="Haas W."/>
            <person name="Sowa M.E."/>
            <person name="Gygi S.P."/>
        </authorList>
    </citation>
    <scope>IDENTIFICATION BY MASS SPECTROMETRY [LARGE SCALE ANALYSIS]</scope>
    <source>
        <tissue>Kidney</tissue>
        <tissue>Liver</tissue>
        <tissue>Pancreas</tissue>
    </source>
</reference>
<reference key="9">
    <citation type="journal article" date="2013" name="Mol. Cell">
        <title>SIRT5-mediated lysine desuccinylation impacts diverse metabolic pathways.</title>
        <authorList>
            <person name="Park J."/>
            <person name="Chen Y."/>
            <person name="Tishkoff D.X."/>
            <person name="Peng C."/>
            <person name="Tan M."/>
            <person name="Dai L."/>
            <person name="Xie Z."/>
            <person name="Zhang Y."/>
            <person name="Zwaans B.M."/>
            <person name="Skinner M.E."/>
            <person name="Lombard D.B."/>
            <person name="Zhao Y."/>
        </authorList>
    </citation>
    <scope>SUCCINYLATION [LARGE SCALE ANALYSIS] AT LYS-144; LYS-244 AND LYS-253</scope>
    <scope>IDENTIFICATION BY MASS SPECTROMETRY [LARGE SCALE ANALYSIS]</scope>
    <source>
        <tissue>Liver</tissue>
    </source>
</reference>
<reference key="10">
    <citation type="journal article" date="2013" name="PLoS ONE">
        <title>Structural basis of the gamma-lactone-ring formation in ascorbic acid biosynthesis by the senescence marker protein-30/gluconolactonase.</title>
        <authorList>
            <person name="Aizawa S."/>
            <person name="Senda M."/>
            <person name="Harada A."/>
            <person name="Maruyama N."/>
            <person name="Ishida T."/>
            <person name="Aigaki T."/>
            <person name="Ishigami A."/>
            <person name="Senda T."/>
        </authorList>
    </citation>
    <scope>X-RAY CRYSTALLOGRAPHY (1.7 ANGSTROMS) IN COMPLEXES WITH SUBSTRATE ANALOGS</scope>
    <scope>CATALYTIC ACTIVITY</scope>
    <scope>FUNCTION</scope>
    <scope>PATHWAY</scope>
    <scope>COFACTOR</scope>
    <scope>ACTIVE SITE</scope>
    <scope>SUBUNIT</scope>
</reference>
<name>RGN_MOUSE</name>
<sequence>MSSIKVECVLRENYRCGESPVWEEASQSLLFVDIPSKIICRWDTVSNQVQRVAVDAPVSSVALRQLGGYVATIGTKFCALNWENQSVFVLAMVDEDKKNNRFNDGKVDPAGRYFAGTMAEETAPAVLERHQGSLYSLFPDHSVKKYFDQVDISNGLDWSLDHKIFYYIDSLSYTVDAFDYDLQTGQISNRRIVYKMEKDEQIPDGMCIDAEGKLWVACYNGGRVIRLDPETGKRLQTVKLPVDKTTSCCFGGKDYSEMYVTCARDGLNAEGLLRQPDAGNIFKITGLGVKGIAPYSYAG</sequence>
<comment type="function">
    <text evidence="1 3 4">Gluconolactonase with low activity towards other sugar lactones, including gulonolactone and galactonolactone. Catalyzes a key step in ascorbic acid (vitamin C) biosynthesis. Can also hydrolyze diisopropyl phosphorofluoridate and phenylacetate (in vitro). Calcium-binding protein. Modulates Ca(2+) signaling, and Ca(2+)-dependent cellular processes and enzyme activities (By similarity).</text>
</comment>
<comment type="catalytic activity">
    <reaction evidence="4">
        <text>D-glucono-1,5-lactone + H2O = D-gluconate + H(+)</text>
        <dbReference type="Rhea" id="RHEA:10440"/>
        <dbReference type="ChEBI" id="CHEBI:15377"/>
        <dbReference type="ChEBI" id="CHEBI:15378"/>
        <dbReference type="ChEBI" id="CHEBI:16217"/>
        <dbReference type="ChEBI" id="CHEBI:18391"/>
        <dbReference type="EC" id="3.1.1.17"/>
    </reaction>
</comment>
<comment type="cofactor">
    <cofactor evidence="1">
        <name>Zn(2+)</name>
        <dbReference type="ChEBI" id="CHEBI:29105"/>
    </cofactor>
    <cofactor evidence="1">
        <name>Mn(2+)</name>
        <dbReference type="ChEBI" id="CHEBI:29035"/>
    </cofactor>
    <cofactor evidence="1">
        <name>Ca(2+)</name>
        <dbReference type="ChEBI" id="CHEBI:29108"/>
    </cofactor>
    <cofactor evidence="1">
        <name>Mg(2+)</name>
        <dbReference type="ChEBI" id="CHEBI:18420"/>
    </cofactor>
    <text evidence="1">Binds 1 divalent metal cation per subunit. Most active with Zn(2+) and Mn(2+) ions. The physiological cofactor is most likely Ca(2+) or Mg(2+).</text>
</comment>
<comment type="pathway">
    <text evidence="3 4">Cofactor biosynthesis; L-ascorbate biosynthesis via UDP-alpha-D-glucuronate pathway; L-ascorbate from UDP-alpha-D-glucuronate: step 3/4.</text>
</comment>
<comment type="subunit">
    <text evidence="4">Monomer.</text>
</comment>
<comment type="subcellular location">
    <subcellularLocation>
        <location>Cytoplasm</location>
    </subcellularLocation>
</comment>
<comment type="tissue specificity">
    <text evidence="5 6">Mainly present in the liver. Weak expression was found in the brain, lung and kidney.</text>
</comment>
<comment type="developmental stage">
    <text>Protein amounts in liver decrease significantly with age.</text>
</comment>
<comment type="induction">
    <text evidence="6">By calcium.</text>
</comment>
<comment type="disruption phenotype">
    <text evidence="2 3">Mice do not thrive after weaning when kept on a vitamin C-less diet. They develop scurvy, have reduced bone mineral density and brittle bones. Hepatocytes exhibit accumulation of lipid droplets. Mice display increased mortality after about 3 months, and their life span is shorter than normal.</text>
</comment>
<comment type="similarity">
    <text evidence="7">Belongs to the SMP-30/CGR1 family.</text>
</comment>
<keyword id="KW-0002">3D-structure</keyword>
<keyword id="KW-0060">Ascorbate biosynthesis</keyword>
<keyword id="KW-0106">Calcium</keyword>
<keyword id="KW-0963">Cytoplasm</keyword>
<keyword id="KW-0378">Hydrolase</keyword>
<keyword id="KW-0479">Metal-binding</keyword>
<keyword id="KW-1185">Reference proteome</keyword>
<accession>Q64374</accession>
<accession>A2AFC8</accession>
<accession>Q3UJG3</accession>
<accession>Q60944</accession>
<proteinExistence type="evidence at protein level"/>